<reference key="1">
    <citation type="journal article" date="1997" name="Nature">
        <title>The complete genome sequence of the hyperthermophilic, sulphate-reducing archaeon Archaeoglobus fulgidus.</title>
        <authorList>
            <person name="Klenk H.-P."/>
            <person name="Clayton R.A."/>
            <person name="Tomb J.-F."/>
            <person name="White O."/>
            <person name="Nelson K.E."/>
            <person name="Ketchum K.A."/>
            <person name="Dodson R.J."/>
            <person name="Gwinn M.L."/>
            <person name="Hickey E.K."/>
            <person name="Peterson J.D."/>
            <person name="Richardson D.L."/>
            <person name="Kerlavage A.R."/>
            <person name="Graham D.E."/>
            <person name="Kyrpides N.C."/>
            <person name="Fleischmann R.D."/>
            <person name="Quackenbush J."/>
            <person name="Lee N.H."/>
            <person name="Sutton G.G."/>
            <person name="Gill S.R."/>
            <person name="Kirkness E.F."/>
            <person name="Dougherty B.A."/>
            <person name="McKenney K."/>
            <person name="Adams M.D."/>
            <person name="Loftus B.J."/>
            <person name="Peterson S.N."/>
            <person name="Reich C.I."/>
            <person name="McNeil L.K."/>
            <person name="Badger J.H."/>
            <person name="Glodek A."/>
            <person name="Zhou L."/>
            <person name="Overbeek R."/>
            <person name="Gocayne J.D."/>
            <person name="Weidman J.F."/>
            <person name="McDonald L.A."/>
            <person name="Utterback T.R."/>
            <person name="Cotton M.D."/>
            <person name="Spriggs T."/>
            <person name="Artiach P."/>
            <person name="Kaine B.P."/>
            <person name="Sykes S.M."/>
            <person name="Sadow P.W."/>
            <person name="D'Andrea K.P."/>
            <person name="Bowman C."/>
            <person name="Fujii C."/>
            <person name="Garland S.A."/>
            <person name="Mason T.M."/>
            <person name="Olsen G.J."/>
            <person name="Fraser C.M."/>
            <person name="Smith H.O."/>
            <person name="Woese C.R."/>
            <person name="Venter J.C."/>
        </authorList>
    </citation>
    <scope>NUCLEOTIDE SEQUENCE [LARGE SCALE GENOMIC DNA]</scope>
    <source>
        <strain>ATCC 49558 / DSM 4304 / JCM 9628 / NBRC 100126 / VC-16</strain>
    </source>
</reference>
<protein>
    <recommendedName>
        <fullName>Uncharacterized protein AF_2343</fullName>
    </recommendedName>
</protein>
<proteinExistence type="predicted"/>
<sequence>MNEALLREIYSEVKKIREKIEQLEELIIPAEKVSEEELLEIRKLKEESLKGEHVDWDELKRELGV</sequence>
<keyword id="KW-1185">Reference proteome</keyword>
<gene>
    <name type="ordered locus">AF_2343</name>
</gene>
<feature type="chain" id="PRO_0000128143" description="Uncharacterized protein AF_2343">
    <location>
        <begin position="1"/>
        <end position="65"/>
    </location>
</feature>
<organism>
    <name type="scientific">Archaeoglobus fulgidus (strain ATCC 49558 / DSM 4304 / JCM 9628 / NBRC 100126 / VC-16)</name>
    <dbReference type="NCBI Taxonomy" id="224325"/>
    <lineage>
        <taxon>Archaea</taxon>
        <taxon>Methanobacteriati</taxon>
        <taxon>Methanobacteriota</taxon>
        <taxon>Archaeoglobi</taxon>
        <taxon>Archaeoglobales</taxon>
        <taxon>Archaeoglobaceae</taxon>
        <taxon>Archaeoglobus</taxon>
    </lineage>
</organism>
<name>Y2343_ARCFU</name>
<dbReference type="EMBL" id="AE000782">
    <property type="protein sequence ID" value="AAB88928.1"/>
    <property type="molecule type" value="Genomic_DNA"/>
</dbReference>
<dbReference type="PIR" id="G69542">
    <property type="entry name" value="G69542"/>
</dbReference>
<dbReference type="RefSeq" id="WP_010879832.1">
    <property type="nucleotide sequence ID" value="NC_000917.1"/>
</dbReference>
<dbReference type="SMR" id="O27941"/>
<dbReference type="STRING" id="224325.AF_2343"/>
<dbReference type="PaxDb" id="224325-AF_2343"/>
<dbReference type="EnsemblBacteria" id="AAB88928">
    <property type="protein sequence ID" value="AAB88928"/>
    <property type="gene ID" value="AF_2343"/>
</dbReference>
<dbReference type="GeneID" id="1485576"/>
<dbReference type="KEGG" id="afu:AF_2343"/>
<dbReference type="eggNOG" id="arCOG09828">
    <property type="taxonomic scope" value="Archaea"/>
</dbReference>
<dbReference type="HOGENOM" id="CLU_2839174_0_0_2"/>
<dbReference type="OrthoDB" id="383463at2157"/>
<dbReference type="Proteomes" id="UP000002199">
    <property type="component" value="Chromosome"/>
</dbReference>
<accession>O27941</accession>